<comment type="function">
    <text evidence="1">Nucleotidase that shows phosphatase activity on nucleoside 5'-monophosphates.</text>
</comment>
<comment type="catalytic activity">
    <reaction evidence="1">
        <text>a ribonucleoside 5'-phosphate + H2O = a ribonucleoside + phosphate</text>
        <dbReference type="Rhea" id="RHEA:12484"/>
        <dbReference type="ChEBI" id="CHEBI:15377"/>
        <dbReference type="ChEBI" id="CHEBI:18254"/>
        <dbReference type="ChEBI" id="CHEBI:43474"/>
        <dbReference type="ChEBI" id="CHEBI:58043"/>
        <dbReference type="EC" id="3.1.3.5"/>
    </reaction>
</comment>
<comment type="cofactor">
    <cofactor evidence="1">
        <name>a divalent metal cation</name>
        <dbReference type="ChEBI" id="CHEBI:60240"/>
    </cofactor>
    <text evidence="1">Binds 1 divalent metal cation per subunit.</text>
</comment>
<comment type="subcellular location">
    <subcellularLocation>
        <location evidence="1">Cytoplasm</location>
    </subcellularLocation>
</comment>
<comment type="similarity">
    <text evidence="1">Belongs to the SurE nucleotidase family.</text>
</comment>
<gene>
    <name evidence="1" type="primary">surE</name>
    <name type="ordered locus">STH1714</name>
</gene>
<evidence type="ECO:0000255" key="1">
    <source>
        <dbReference type="HAMAP-Rule" id="MF_00060"/>
    </source>
</evidence>
<sequence length="256" mass="27853">MALVLLTNDDGIFAPGINALRARMEQIPGLEVWAVAPDRERSASGHAITTYRPLFPVRVEIPGAVAPCISVTGTPADSAKLAIEAILPRRPDLVISGINRGANLGTDIFYSGTVAAALEGPILGIPALAVSLDSMTSSDYSAAADFAAQLALKVLEEGLPEGTLLNVNVPALPREAIKGVRVTKVGRRIYRDQWVRRMHPRGQEYYWLAGELAEIHNDRESDVSAVEAGYISVTPVHLDLTRYDQMDRLRQWNLTF</sequence>
<keyword id="KW-0963">Cytoplasm</keyword>
<keyword id="KW-0378">Hydrolase</keyword>
<keyword id="KW-0479">Metal-binding</keyword>
<keyword id="KW-0547">Nucleotide-binding</keyword>
<keyword id="KW-1185">Reference proteome</keyword>
<protein>
    <recommendedName>
        <fullName evidence="1">5'-nucleotidase SurE</fullName>
        <ecNumber evidence="1">3.1.3.5</ecNumber>
    </recommendedName>
    <alternativeName>
        <fullName evidence="1">Nucleoside 5'-monophosphate phosphohydrolase</fullName>
    </alternativeName>
</protein>
<reference key="1">
    <citation type="journal article" date="2004" name="Nucleic Acids Res.">
        <title>Genome sequence of Symbiobacterium thermophilum, an uncultivable bacterium that depends on microbial commensalism.</title>
        <authorList>
            <person name="Ueda K."/>
            <person name="Yamashita A."/>
            <person name="Ishikawa J."/>
            <person name="Shimada M."/>
            <person name="Watsuji T."/>
            <person name="Morimura K."/>
            <person name="Ikeda H."/>
            <person name="Hattori M."/>
            <person name="Beppu T."/>
        </authorList>
    </citation>
    <scope>NUCLEOTIDE SEQUENCE [LARGE SCALE GENOMIC DNA]</scope>
    <source>
        <strain>DSM 24528 / JCM 14929 / IAM 14863 / T</strain>
    </source>
</reference>
<name>SURE_SYMTH</name>
<proteinExistence type="inferred from homology"/>
<organism>
    <name type="scientific">Symbiobacterium thermophilum (strain DSM 24528 / JCM 14929 / IAM 14863 / T)</name>
    <dbReference type="NCBI Taxonomy" id="292459"/>
    <lineage>
        <taxon>Bacteria</taxon>
        <taxon>Bacillati</taxon>
        <taxon>Bacillota</taxon>
        <taxon>Clostridia</taxon>
        <taxon>Eubacteriales</taxon>
        <taxon>Symbiobacteriaceae</taxon>
        <taxon>Symbiobacterium</taxon>
    </lineage>
</organism>
<accession>Q67NP4</accession>
<feature type="chain" id="PRO_0000235654" description="5'-nucleotidase SurE">
    <location>
        <begin position="1"/>
        <end position="256"/>
    </location>
</feature>
<feature type="binding site" evidence="1">
    <location>
        <position position="9"/>
    </location>
    <ligand>
        <name>a divalent metal cation</name>
        <dbReference type="ChEBI" id="CHEBI:60240"/>
    </ligand>
</feature>
<feature type="binding site" evidence="1">
    <location>
        <position position="10"/>
    </location>
    <ligand>
        <name>a divalent metal cation</name>
        <dbReference type="ChEBI" id="CHEBI:60240"/>
    </ligand>
</feature>
<feature type="binding site" evidence="1">
    <location>
        <position position="42"/>
    </location>
    <ligand>
        <name>a divalent metal cation</name>
        <dbReference type="ChEBI" id="CHEBI:60240"/>
    </ligand>
</feature>
<feature type="binding site" evidence="1">
    <location>
        <position position="99"/>
    </location>
    <ligand>
        <name>a divalent metal cation</name>
        <dbReference type="ChEBI" id="CHEBI:60240"/>
    </ligand>
</feature>
<dbReference type="EC" id="3.1.3.5" evidence="1"/>
<dbReference type="EMBL" id="AP006840">
    <property type="protein sequence ID" value="BAD40699.1"/>
    <property type="molecule type" value="Genomic_DNA"/>
</dbReference>
<dbReference type="RefSeq" id="WP_011195842.1">
    <property type="nucleotide sequence ID" value="NC_006177.1"/>
</dbReference>
<dbReference type="SMR" id="Q67NP4"/>
<dbReference type="STRING" id="292459.STH1714"/>
<dbReference type="KEGG" id="sth:STH1714"/>
<dbReference type="eggNOG" id="COG0496">
    <property type="taxonomic scope" value="Bacteria"/>
</dbReference>
<dbReference type="HOGENOM" id="CLU_045192_1_3_9"/>
<dbReference type="OrthoDB" id="9780815at2"/>
<dbReference type="Proteomes" id="UP000000417">
    <property type="component" value="Chromosome"/>
</dbReference>
<dbReference type="GO" id="GO:0005737">
    <property type="term" value="C:cytoplasm"/>
    <property type="evidence" value="ECO:0007669"/>
    <property type="project" value="UniProtKB-SubCell"/>
</dbReference>
<dbReference type="GO" id="GO:0008254">
    <property type="term" value="F:3'-nucleotidase activity"/>
    <property type="evidence" value="ECO:0007669"/>
    <property type="project" value="TreeGrafter"/>
</dbReference>
<dbReference type="GO" id="GO:0008253">
    <property type="term" value="F:5'-nucleotidase activity"/>
    <property type="evidence" value="ECO:0007669"/>
    <property type="project" value="UniProtKB-UniRule"/>
</dbReference>
<dbReference type="GO" id="GO:0004309">
    <property type="term" value="F:exopolyphosphatase activity"/>
    <property type="evidence" value="ECO:0007669"/>
    <property type="project" value="TreeGrafter"/>
</dbReference>
<dbReference type="GO" id="GO:0046872">
    <property type="term" value="F:metal ion binding"/>
    <property type="evidence" value="ECO:0007669"/>
    <property type="project" value="UniProtKB-UniRule"/>
</dbReference>
<dbReference type="GO" id="GO:0000166">
    <property type="term" value="F:nucleotide binding"/>
    <property type="evidence" value="ECO:0007669"/>
    <property type="project" value="UniProtKB-KW"/>
</dbReference>
<dbReference type="FunFam" id="3.40.1210.10:FF:000001">
    <property type="entry name" value="5'/3'-nucleotidase SurE"/>
    <property type="match status" value="1"/>
</dbReference>
<dbReference type="Gene3D" id="3.40.1210.10">
    <property type="entry name" value="Survival protein SurE-like phosphatase/nucleotidase"/>
    <property type="match status" value="1"/>
</dbReference>
<dbReference type="HAMAP" id="MF_00060">
    <property type="entry name" value="SurE"/>
    <property type="match status" value="1"/>
</dbReference>
<dbReference type="InterPro" id="IPR030048">
    <property type="entry name" value="SurE"/>
</dbReference>
<dbReference type="InterPro" id="IPR002828">
    <property type="entry name" value="SurE-like_Pase/nucleotidase"/>
</dbReference>
<dbReference type="InterPro" id="IPR036523">
    <property type="entry name" value="SurE-like_sf"/>
</dbReference>
<dbReference type="NCBIfam" id="NF001490">
    <property type="entry name" value="PRK00346.1-4"/>
    <property type="match status" value="1"/>
</dbReference>
<dbReference type="NCBIfam" id="NF001492">
    <property type="entry name" value="PRK00346.2-2"/>
    <property type="match status" value="1"/>
</dbReference>
<dbReference type="NCBIfam" id="TIGR00087">
    <property type="entry name" value="surE"/>
    <property type="match status" value="1"/>
</dbReference>
<dbReference type="PANTHER" id="PTHR30457">
    <property type="entry name" value="5'-NUCLEOTIDASE SURE"/>
    <property type="match status" value="1"/>
</dbReference>
<dbReference type="PANTHER" id="PTHR30457:SF12">
    <property type="entry name" value="5'_3'-NUCLEOTIDASE SURE"/>
    <property type="match status" value="1"/>
</dbReference>
<dbReference type="Pfam" id="PF01975">
    <property type="entry name" value="SurE"/>
    <property type="match status" value="1"/>
</dbReference>
<dbReference type="SUPFAM" id="SSF64167">
    <property type="entry name" value="SurE-like"/>
    <property type="match status" value="1"/>
</dbReference>